<feature type="transit peptide" description="Mitochondrion" evidence="3">
    <location>
        <begin position="1"/>
        <end status="unknown"/>
    </location>
</feature>
<feature type="chain" id="PRO_0000280657" description="Cytochrome c oxidase-assembly factor COX23, mitochondrial">
    <location>
        <begin status="unknown"/>
        <end position="139"/>
    </location>
</feature>
<feature type="domain" description="CHCH" evidence="4">
    <location>
        <begin position="84"/>
        <end position="126"/>
    </location>
</feature>
<feature type="region of interest" description="Disordered" evidence="5">
    <location>
        <begin position="1"/>
        <end position="40"/>
    </location>
</feature>
<feature type="short sequence motif" description="Cx9C motif 1" evidence="4">
    <location>
        <begin position="87"/>
        <end position="97"/>
    </location>
</feature>
<feature type="short sequence motif" description="Cx9C motif 2" evidence="4">
    <location>
        <begin position="108"/>
        <end position="118"/>
    </location>
</feature>
<feature type="compositionally biased region" description="Basic and acidic residues" evidence="5">
    <location>
        <begin position="1"/>
        <end position="12"/>
    </location>
</feature>
<feature type="compositionally biased region" description="Low complexity" evidence="5">
    <location>
        <begin position="13"/>
        <end position="35"/>
    </location>
</feature>
<feature type="disulfide bond" evidence="4">
    <location>
        <begin position="87"/>
        <end position="118"/>
    </location>
</feature>
<feature type="disulfide bond" evidence="4">
    <location>
        <begin position="97"/>
        <end position="108"/>
    </location>
</feature>
<proteinExistence type="inferred from homology"/>
<dbReference type="EMBL" id="CP017630">
    <property type="protein sequence ID" value="AOW30872.1"/>
    <property type="molecule type" value="Genomic_DNA"/>
</dbReference>
<dbReference type="RefSeq" id="XP_717935.1">
    <property type="nucleotide sequence ID" value="XM_712842.1"/>
</dbReference>
<dbReference type="SMR" id="Q5A884"/>
<dbReference type="FunCoup" id="Q5A884">
    <property type="interactions" value="12"/>
</dbReference>
<dbReference type="STRING" id="237561.Q5A884"/>
<dbReference type="EnsemblFungi" id="CR_01100C_A-T">
    <property type="protein sequence ID" value="CR_01100C_A-T-p1"/>
    <property type="gene ID" value="CR_01100C_A"/>
</dbReference>
<dbReference type="GeneID" id="3640378"/>
<dbReference type="KEGG" id="cal:CAALFM_CR01100CA"/>
<dbReference type="CGD" id="CAL0000183908">
    <property type="gene designation" value="orf19.10754"/>
</dbReference>
<dbReference type="VEuPathDB" id="FungiDB:CR_01100C_A"/>
<dbReference type="eggNOG" id="KOG4618">
    <property type="taxonomic scope" value="Eukaryota"/>
</dbReference>
<dbReference type="HOGENOM" id="CLU_153383_0_0_1"/>
<dbReference type="InParanoid" id="Q5A884"/>
<dbReference type="OMA" id="NPENHRH"/>
<dbReference type="OrthoDB" id="9971592at2759"/>
<dbReference type="PRO" id="PR:Q5A884"/>
<dbReference type="Proteomes" id="UP000000559">
    <property type="component" value="Chromosome R"/>
</dbReference>
<dbReference type="GO" id="GO:0005758">
    <property type="term" value="C:mitochondrial intermembrane space"/>
    <property type="evidence" value="ECO:0007669"/>
    <property type="project" value="UniProtKB-SubCell"/>
</dbReference>
<dbReference type="GO" id="GO:0033617">
    <property type="term" value="P:mitochondrial cytochrome c oxidase assembly"/>
    <property type="evidence" value="ECO:0007669"/>
    <property type="project" value="EnsemblFungi"/>
</dbReference>
<dbReference type="InterPro" id="IPR051040">
    <property type="entry name" value="COX23"/>
</dbReference>
<dbReference type="InterPro" id="IPR009069">
    <property type="entry name" value="Cys_alpha_HP_mot_SF"/>
</dbReference>
<dbReference type="PANTHER" id="PTHR46811">
    <property type="entry name" value="COILED-COIL-HELIX-COILED-COIL-HELIX DOMAIN-CONTAINING PROTEIN 7"/>
    <property type="match status" value="1"/>
</dbReference>
<dbReference type="PANTHER" id="PTHR46811:SF1">
    <property type="entry name" value="COILED-COIL-HELIX-COILED-COIL-HELIX DOMAIN-CONTAINING PROTEIN 7"/>
    <property type="match status" value="1"/>
</dbReference>
<dbReference type="SUPFAM" id="SSF47072">
    <property type="entry name" value="Cysteine alpha-hairpin motif"/>
    <property type="match status" value="1"/>
</dbReference>
<dbReference type="PROSITE" id="PS51808">
    <property type="entry name" value="CHCH"/>
    <property type="match status" value="1"/>
</dbReference>
<sequence length="139" mass="16477">MTEITETKKEADTPIIPKNTNTTATTTPTTKQQPTKLISDEVEKDTSKVDFTKGGVEEFKFYPDNPKSHRHKYKWSMKEPSKFYDPCEESRMASMDCLYRNQDDKYACQEFFDAYRECRKDFFRKKRQDNRDGAKGWGW</sequence>
<accession>Q5A884</accession>
<accession>A0A1D8PRW4</accession>
<comment type="function">
    <text evidence="2">Required for the assembly of cytochrome c oxidase.</text>
</comment>
<comment type="subcellular location">
    <subcellularLocation>
        <location evidence="1">Mitochondrion intermembrane space</location>
    </subcellularLocation>
</comment>
<comment type="similarity">
    <text evidence="6">Belongs to the COX23 family.</text>
</comment>
<keyword id="KW-1015">Disulfide bond</keyword>
<keyword id="KW-0496">Mitochondrion</keyword>
<keyword id="KW-1185">Reference proteome</keyword>
<keyword id="KW-0809">Transit peptide</keyword>
<evidence type="ECO:0000250" key="1"/>
<evidence type="ECO:0000250" key="2">
    <source>
        <dbReference type="UniProtKB" id="P38824"/>
    </source>
</evidence>
<evidence type="ECO:0000255" key="3"/>
<evidence type="ECO:0000255" key="4">
    <source>
        <dbReference type="PROSITE-ProRule" id="PRU01150"/>
    </source>
</evidence>
<evidence type="ECO:0000256" key="5">
    <source>
        <dbReference type="SAM" id="MobiDB-lite"/>
    </source>
</evidence>
<evidence type="ECO:0000305" key="6"/>
<name>COX23_CANAL</name>
<reference key="1">
    <citation type="journal article" date="2004" name="Proc. Natl. Acad. Sci. U.S.A.">
        <title>The diploid genome sequence of Candida albicans.</title>
        <authorList>
            <person name="Jones T."/>
            <person name="Federspiel N.A."/>
            <person name="Chibana H."/>
            <person name="Dungan J."/>
            <person name="Kalman S."/>
            <person name="Magee B.B."/>
            <person name="Newport G."/>
            <person name="Thorstenson Y.R."/>
            <person name="Agabian N."/>
            <person name="Magee P.T."/>
            <person name="Davis R.W."/>
            <person name="Scherer S."/>
        </authorList>
    </citation>
    <scope>NUCLEOTIDE SEQUENCE [LARGE SCALE GENOMIC DNA]</scope>
    <source>
        <strain>SC5314 / ATCC MYA-2876</strain>
    </source>
</reference>
<reference key="2">
    <citation type="journal article" date="2007" name="Genome Biol.">
        <title>Assembly of the Candida albicans genome into sixteen supercontigs aligned on the eight chromosomes.</title>
        <authorList>
            <person name="van het Hoog M."/>
            <person name="Rast T.J."/>
            <person name="Martchenko M."/>
            <person name="Grindle S."/>
            <person name="Dignard D."/>
            <person name="Hogues H."/>
            <person name="Cuomo C."/>
            <person name="Berriman M."/>
            <person name="Scherer S."/>
            <person name="Magee B.B."/>
            <person name="Whiteway M."/>
            <person name="Chibana H."/>
            <person name="Nantel A."/>
            <person name="Magee P.T."/>
        </authorList>
    </citation>
    <scope>GENOME REANNOTATION</scope>
    <source>
        <strain>SC5314 / ATCC MYA-2876</strain>
    </source>
</reference>
<reference key="3">
    <citation type="journal article" date="2013" name="Genome Biol.">
        <title>Assembly of a phased diploid Candida albicans genome facilitates allele-specific measurements and provides a simple model for repeat and indel structure.</title>
        <authorList>
            <person name="Muzzey D."/>
            <person name="Schwartz K."/>
            <person name="Weissman J.S."/>
            <person name="Sherlock G."/>
        </authorList>
    </citation>
    <scope>NUCLEOTIDE SEQUENCE [LARGE SCALE GENOMIC DNA]</scope>
    <scope>GENOME REANNOTATION</scope>
    <source>
        <strain>SC5314 / ATCC MYA-2876</strain>
    </source>
</reference>
<organism>
    <name type="scientific">Candida albicans (strain SC5314 / ATCC MYA-2876)</name>
    <name type="common">Yeast</name>
    <dbReference type="NCBI Taxonomy" id="237561"/>
    <lineage>
        <taxon>Eukaryota</taxon>
        <taxon>Fungi</taxon>
        <taxon>Dikarya</taxon>
        <taxon>Ascomycota</taxon>
        <taxon>Saccharomycotina</taxon>
        <taxon>Pichiomycetes</taxon>
        <taxon>Debaryomycetaceae</taxon>
        <taxon>Candida/Lodderomyces clade</taxon>
        <taxon>Candida</taxon>
    </lineage>
</organism>
<gene>
    <name type="primary">COX23</name>
    <name type="ordered locus">CAALFM_CR01100CA</name>
    <name type="ORF">CaO19.10754</name>
    <name type="ORF">CaO19.3244</name>
</gene>
<protein>
    <recommendedName>
        <fullName>Cytochrome c oxidase-assembly factor COX23, mitochondrial</fullName>
    </recommendedName>
</protein>